<name>LEUD_AROAE</name>
<organism>
    <name type="scientific">Aromatoleum aromaticum (strain DSM 19018 / LMG 30748 / EbN1)</name>
    <name type="common">Azoarcus sp. (strain EbN1)</name>
    <dbReference type="NCBI Taxonomy" id="76114"/>
    <lineage>
        <taxon>Bacteria</taxon>
        <taxon>Pseudomonadati</taxon>
        <taxon>Pseudomonadota</taxon>
        <taxon>Betaproteobacteria</taxon>
        <taxon>Rhodocyclales</taxon>
        <taxon>Rhodocyclaceae</taxon>
        <taxon>Aromatoleum</taxon>
    </lineage>
</organism>
<gene>
    <name evidence="1" type="primary">leuD</name>
    <name type="ordered locus">AZOSEA26920</name>
    <name type="ORF">ebA4758</name>
</gene>
<reference key="1">
    <citation type="journal article" date="2005" name="Arch. Microbiol.">
        <title>The genome sequence of an anaerobic aromatic-degrading denitrifying bacterium, strain EbN1.</title>
        <authorList>
            <person name="Rabus R."/>
            <person name="Kube M."/>
            <person name="Heider J."/>
            <person name="Beck A."/>
            <person name="Heitmann K."/>
            <person name="Widdel F."/>
            <person name="Reinhardt R."/>
        </authorList>
    </citation>
    <scope>NUCLEOTIDE SEQUENCE [LARGE SCALE GENOMIC DNA]</scope>
    <source>
        <strain>DSM 19018 / LMG 30748 / EbN1</strain>
    </source>
</reference>
<evidence type="ECO:0000255" key="1">
    <source>
        <dbReference type="HAMAP-Rule" id="MF_01031"/>
    </source>
</evidence>
<protein>
    <recommendedName>
        <fullName evidence="1">3-isopropylmalate dehydratase small subunit</fullName>
        <ecNumber evidence="1">4.2.1.33</ecNumber>
    </recommendedName>
    <alternativeName>
        <fullName evidence="1">Alpha-IPM isomerase</fullName>
        <shortName evidence="1">IPMI</shortName>
    </alternativeName>
    <alternativeName>
        <fullName evidence="1">Isopropylmalate isomerase</fullName>
    </alternativeName>
</protein>
<feature type="chain" id="PRO_0000141774" description="3-isopropylmalate dehydratase small subunit">
    <location>
        <begin position="1"/>
        <end position="213"/>
    </location>
</feature>
<keyword id="KW-0028">Amino-acid biosynthesis</keyword>
<keyword id="KW-0100">Branched-chain amino acid biosynthesis</keyword>
<keyword id="KW-0432">Leucine biosynthesis</keyword>
<keyword id="KW-0456">Lyase</keyword>
<keyword id="KW-1185">Reference proteome</keyword>
<sequence length="213" mass="24429">MKPFTELNGRVAPLDRANVDTDAIIPKQFLKSIKRSGFGPNLFDEWRYTDHGEPGQDCVNRPKNPDFVLNQPRYEGAQILLTRDNFGCGSSREHAPWALEDYGFRVLIGSSFADIFFNNCFKNGLLPIVLPAPEIDELFRQCEATDGYRLKVDLATQTIVRPDGKTIAFEVDPFRKECLLNGWDDIGLTLRHADRIRTFEEKRRADHPYYFVA</sequence>
<proteinExistence type="inferred from homology"/>
<comment type="function">
    <text evidence="1">Catalyzes the isomerization between 2-isopropylmalate and 3-isopropylmalate, via the formation of 2-isopropylmaleate.</text>
</comment>
<comment type="catalytic activity">
    <reaction evidence="1">
        <text>(2R,3S)-3-isopropylmalate = (2S)-2-isopropylmalate</text>
        <dbReference type="Rhea" id="RHEA:32287"/>
        <dbReference type="ChEBI" id="CHEBI:1178"/>
        <dbReference type="ChEBI" id="CHEBI:35121"/>
        <dbReference type="EC" id="4.2.1.33"/>
    </reaction>
</comment>
<comment type="pathway">
    <text evidence="1">Amino-acid biosynthesis; L-leucine biosynthesis; L-leucine from 3-methyl-2-oxobutanoate: step 2/4.</text>
</comment>
<comment type="subunit">
    <text evidence="1">Heterodimer of LeuC and LeuD.</text>
</comment>
<comment type="similarity">
    <text evidence="1">Belongs to the LeuD family. LeuD type 1 subfamily.</text>
</comment>
<accession>Q5P1J7</accession>
<dbReference type="EC" id="4.2.1.33" evidence="1"/>
<dbReference type="EMBL" id="CR555306">
    <property type="protein sequence ID" value="CAI08817.1"/>
    <property type="molecule type" value="Genomic_DNA"/>
</dbReference>
<dbReference type="RefSeq" id="WP_011238500.1">
    <property type="nucleotide sequence ID" value="NC_006513.1"/>
</dbReference>
<dbReference type="SMR" id="Q5P1J7"/>
<dbReference type="STRING" id="76114.ebA4758"/>
<dbReference type="KEGG" id="eba:ebA4758"/>
<dbReference type="eggNOG" id="COG0066">
    <property type="taxonomic scope" value="Bacteria"/>
</dbReference>
<dbReference type="HOGENOM" id="CLU_081378_0_3_4"/>
<dbReference type="OrthoDB" id="9777465at2"/>
<dbReference type="UniPathway" id="UPA00048">
    <property type="reaction ID" value="UER00071"/>
</dbReference>
<dbReference type="Proteomes" id="UP000006552">
    <property type="component" value="Chromosome"/>
</dbReference>
<dbReference type="GO" id="GO:0009316">
    <property type="term" value="C:3-isopropylmalate dehydratase complex"/>
    <property type="evidence" value="ECO:0007669"/>
    <property type="project" value="InterPro"/>
</dbReference>
<dbReference type="GO" id="GO:0003861">
    <property type="term" value="F:3-isopropylmalate dehydratase activity"/>
    <property type="evidence" value="ECO:0007669"/>
    <property type="project" value="UniProtKB-UniRule"/>
</dbReference>
<dbReference type="GO" id="GO:0009098">
    <property type="term" value="P:L-leucine biosynthetic process"/>
    <property type="evidence" value="ECO:0007669"/>
    <property type="project" value="UniProtKB-UniRule"/>
</dbReference>
<dbReference type="CDD" id="cd01577">
    <property type="entry name" value="IPMI_Swivel"/>
    <property type="match status" value="1"/>
</dbReference>
<dbReference type="FunFam" id="3.20.19.10:FF:000003">
    <property type="entry name" value="3-isopropylmalate dehydratase small subunit"/>
    <property type="match status" value="1"/>
</dbReference>
<dbReference type="Gene3D" id="3.20.19.10">
    <property type="entry name" value="Aconitase, domain 4"/>
    <property type="match status" value="1"/>
</dbReference>
<dbReference type="HAMAP" id="MF_01031">
    <property type="entry name" value="LeuD_type1"/>
    <property type="match status" value="1"/>
</dbReference>
<dbReference type="InterPro" id="IPR004431">
    <property type="entry name" value="3-IsopropMal_deHydase_ssu"/>
</dbReference>
<dbReference type="InterPro" id="IPR015928">
    <property type="entry name" value="Aconitase/3IPM_dehydase_swvl"/>
</dbReference>
<dbReference type="InterPro" id="IPR000573">
    <property type="entry name" value="AconitaseA/IPMdHydase_ssu_swvl"/>
</dbReference>
<dbReference type="InterPro" id="IPR033940">
    <property type="entry name" value="IPMI_Swivel"/>
</dbReference>
<dbReference type="InterPro" id="IPR050075">
    <property type="entry name" value="LeuD"/>
</dbReference>
<dbReference type="NCBIfam" id="TIGR00171">
    <property type="entry name" value="leuD"/>
    <property type="match status" value="1"/>
</dbReference>
<dbReference type="NCBIfam" id="NF002458">
    <property type="entry name" value="PRK01641.1"/>
    <property type="match status" value="1"/>
</dbReference>
<dbReference type="PANTHER" id="PTHR43345:SF5">
    <property type="entry name" value="3-ISOPROPYLMALATE DEHYDRATASE SMALL SUBUNIT"/>
    <property type="match status" value="1"/>
</dbReference>
<dbReference type="PANTHER" id="PTHR43345">
    <property type="entry name" value="3-ISOPROPYLMALATE DEHYDRATASE SMALL SUBUNIT 2-RELATED-RELATED"/>
    <property type="match status" value="1"/>
</dbReference>
<dbReference type="Pfam" id="PF00694">
    <property type="entry name" value="Aconitase_C"/>
    <property type="match status" value="1"/>
</dbReference>
<dbReference type="SUPFAM" id="SSF52016">
    <property type="entry name" value="LeuD/IlvD-like"/>
    <property type="match status" value="1"/>
</dbReference>